<keyword id="KW-0175">Coiled coil</keyword>
<keyword id="KW-0963">Cytoplasm</keyword>
<keyword id="KW-0967">Endosome</keyword>
<keyword id="KW-0472">Membrane</keyword>
<keyword id="KW-0653">Protein transport</keyword>
<keyword id="KW-1185">Reference proteome</keyword>
<keyword id="KW-0813">Transport</keyword>
<sequence>MDDTLFQLKFTAKQLEKLAKKAEKDSNTEQAKVKKALQQKNVEVARVYAENAIRKKNEGLNWLRMASRVDAVASKVQTAVTMKGVTKNMAQVTKALDKALSSMDLQKVSAVMDKFDQQVQNLDVHTSVMEDSMSSAMTLTTPQEQVDNLIVQIAEENGLEVMDQLNQLPQGASSVGESSTRTQEDQLSRRLASLRN</sequence>
<comment type="function">
    <text evidence="1">Probable peripherally associated component of the endosomal sorting required for transport complex III (ESCRT-III) which is involved in multivesicular bodies (MVBs) formation and sorting of endosomal cargo proteins into MVBs. MVBs contain intraluminal vesicles (ILVs) that are generated by invagination and scission from the limiting membrane of the endosome and mostly are delivered to lysosomes enabling degradation of membrane proteins, such as stimulated growth factor receptors, lysosomal enzymes and lipids (By similarity).</text>
</comment>
<comment type="subunit">
    <text evidence="1">Probable peripherally associated component of the endosomal sorting required for transport complex III (ESCRT-III).</text>
</comment>
<comment type="subcellular location">
    <subcellularLocation>
        <location evidence="1">Cytoplasm</location>
    </subcellularLocation>
    <subcellularLocation>
        <location evidence="1">Endosome membrane</location>
        <topology evidence="1">Peripheral membrane protein</topology>
    </subcellularLocation>
</comment>
<comment type="similarity">
    <text evidence="4">Belongs to the SNF7 family.</text>
</comment>
<dbReference type="EMBL" id="BC068657">
    <property type="protein sequence ID" value="AAH68657.1"/>
    <property type="molecule type" value="mRNA"/>
</dbReference>
<dbReference type="RefSeq" id="NP_001084706.1">
    <property type="nucleotide sequence ID" value="NM_001091237.1"/>
</dbReference>
<dbReference type="SMR" id="Q6NUD8"/>
<dbReference type="DNASU" id="414667"/>
<dbReference type="GeneID" id="414667"/>
<dbReference type="KEGG" id="xla:414667"/>
<dbReference type="AGR" id="Xenbase:XB-GENE-5813040"/>
<dbReference type="CTD" id="414667"/>
<dbReference type="Xenbase" id="XB-GENE-5813040">
    <property type="gene designation" value="chmp1a.S"/>
</dbReference>
<dbReference type="OMA" id="DMIFQLR"/>
<dbReference type="OrthoDB" id="10266568at2759"/>
<dbReference type="Proteomes" id="UP000186698">
    <property type="component" value="Chromosome 4S"/>
</dbReference>
<dbReference type="Bgee" id="414667">
    <property type="expression patterns" value="Expressed in blastula and 19 other cell types or tissues"/>
</dbReference>
<dbReference type="GO" id="GO:0000815">
    <property type="term" value="C:ESCRT III complex"/>
    <property type="evidence" value="ECO:0000318"/>
    <property type="project" value="GO_Central"/>
</dbReference>
<dbReference type="GO" id="GO:0005771">
    <property type="term" value="C:multivesicular body"/>
    <property type="evidence" value="ECO:0000318"/>
    <property type="project" value="GO_Central"/>
</dbReference>
<dbReference type="GO" id="GO:0032509">
    <property type="term" value="P:endosome transport via multivesicular body sorting pathway"/>
    <property type="evidence" value="ECO:0000318"/>
    <property type="project" value="GO_Central"/>
</dbReference>
<dbReference type="GO" id="GO:0045324">
    <property type="term" value="P:late endosome to vacuole transport"/>
    <property type="evidence" value="ECO:0000318"/>
    <property type="project" value="GO_Central"/>
</dbReference>
<dbReference type="GO" id="GO:0015031">
    <property type="term" value="P:protein transport"/>
    <property type="evidence" value="ECO:0000318"/>
    <property type="project" value="GO_Central"/>
</dbReference>
<dbReference type="Gene3D" id="6.10.140.1230">
    <property type="match status" value="1"/>
</dbReference>
<dbReference type="InterPro" id="IPR005024">
    <property type="entry name" value="Snf7_fam"/>
</dbReference>
<dbReference type="PANTHER" id="PTHR10476">
    <property type="entry name" value="CHARGED MULTIVESICULAR BODY PROTEIN"/>
    <property type="match status" value="1"/>
</dbReference>
<dbReference type="Pfam" id="PF03357">
    <property type="entry name" value="Snf7"/>
    <property type="match status" value="1"/>
</dbReference>
<proteinExistence type="evidence at transcript level"/>
<feature type="chain" id="PRO_0000211452" description="Charged multivesicular body protein 1a">
    <location>
        <begin position="1"/>
        <end position="196"/>
    </location>
</feature>
<feature type="region of interest" description="Disordered" evidence="3">
    <location>
        <begin position="170"/>
        <end position="196"/>
    </location>
</feature>
<feature type="coiled-coil region" evidence="2">
    <location>
        <begin position="5"/>
        <end position="41"/>
    </location>
</feature>
<feature type="short sequence motif" description="MIT-interacting motif">
    <location>
        <begin position="185"/>
        <end position="195"/>
    </location>
</feature>
<feature type="compositionally biased region" description="Polar residues" evidence="3">
    <location>
        <begin position="170"/>
        <end position="181"/>
    </location>
</feature>
<reference key="1">
    <citation type="submission" date="2004-04" db="EMBL/GenBank/DDBJ databases">
        <authorList>
            <consortium name="NIH - Xenopus Gene Collection (XGC) project"/>
        </authorList>
    </citation>
    <scope>NUCLEOTIDE SEQUENCE [LARGE SCALE MRNA]</scope>
    <source>
        <tissue>Ovary</tissue>
    </source>
</reference>
<organism>
    <name type="scientific">Xenopus laevis</name>
    <name type="common">African clawed frog</name>
    <dbReference type="NCBI Taxonomy" id="8355"/>
    <lineage>
        <taxon>Eukaryota</taxon>
        <taxon>Metazoa</taxon>
        <taxon>Chordata</taxon>
        <taxon>Craniata</taxon>
        <taxon>Vertebrata</taxon>
        <taxon>Euteleostomi</taxon>
        <taxon>Amphibia</taxon>
        <taxon>Batrachia</taxon>
        <taxon>Anura</taxon>
        <taxon>Pipoidea</taxon>
        <taxon>Pipidae</taxon>
        <taxon>Xenopodinae</taxon>
        <taxon>Xenopus</taxon>
        <taxon>Xenopus</taxon>
    </lineage>
</organism>
<name>CHM1A_XENLA</name>
<evidence type="ECO:0000250" key="1"/>
<evidence type="ECO:0000255" key="2"/>
<evidence type="ECO:0000256" key="3">
    <source>
        <dbReference type="SAM" id="MobiDB-lite"/>
    </source>
</evidence>
<evidence type="ECO:0000305" key="4"/>
<protein>
    <recommendedName>
        <fullName>Charged multivesicular body protein 1a</fullName>
    </recommendedName>
    <alternativeName>
        <fullName>Chromatin-modifying protein 1a</fullName>
        <shortName>CHMP1a</shortName>
    </alternativeName>
</protein>
<accession>Q6NUD8</accession>
<gene>
    <name type="primary">chmp1a</name>
    <name type="synonym">pcoln3</name>
</gene>